<reference key="1">
    <citation type="submission" date="2000-12" db="EMBL/GenBank/DDBJ databases">
        <title>Isolation of full-length cDNA clones from macaque brain cDNA libraries.</title>
        <authorList>
            <person name="Osada N."/>
            <person name="Hida M."/>
            <person name="Kusuda J."/>
            <person name="Tanuma R."/>
            <person name="Iseki K."/>
            <person name="Hirai M."/>
            <person name="Terao K."/>
            <person name="Suzuki Y."/>
            <person name="Sugano S."/>
            <person name="Hashimoto K."/>
        </authorList>
    </citation>
    <scope>NUCLEOTIDE SEQUENCE [LARGE SCALE MRNA]</scope>
    <source>
        <tissue>Parietal cortex</tissue>
    </source>
</reference>
<organism>
    <name type="scientific">Macaca fascicularis</name>
    <name type="common">Crab-eating macaque</name>
    <name type="synonym">Cynomolgus monkey</name>
    <dbReference type="NCBI Taxonomy" id="9541"/>
    <lineage>
        <taxon>Eukaryota</taxon>
        <taxon>Metazoa</taxon>
        <taxon>Chordata</taxon>
        <taxon>Craniata</taxon>
        <taxon>Vertebrata</taxon>
        <taxon>Euteleostomi</taxon>
        <taxon>Mammalia</taxon>
        <taxon>Eutheria</taxon>
        <taxon>Euarchontoglires</taxon>
        <taxon>Primates</taxon>
        <taxon>Haplorrhini</taxon>
        <taxon>Catarrhini</taxon>
        <taxon>Cercopithecidae</taxon>
        <taxon>Cercopithecinae</taxon>
        <taxon>Macaca</taxon>
    </lineage>
</organism>
<accession>Q9GKR7</accession>
<sequence length="443" mass="51708">MEEDSQEDSNLPPKVWHSEMTVSVTGKPPSTVEEDGLPKETDVETIPEILETREPLSLPDVLRISAVLEDTTDQLSILNYIMPIQYEGRQSVCVKSREMNLEGKNLDKLPVASTVTKTPSPLITKERPSLPEIRQGGQFAVEFCKTQDLLFKKPARQTIMTTETLKKIQIDRQFFSDVIADTIEELQDSGTYNSLLQALSKERENKMHFYDVIAREEKGRKQIISLQKQLINVKKEWQFEVQSQNEYIANLKDQLQEMKAKSNLENRYMKTNTELQIAQTQRKCNRTEEVLLEEIEKLRMKTEEEARIHMDIEMFLRKQQQKLEERLEFWMEKYDKDTEMKQNELNALKATKASDLAHLQDLAKTIRECEQVIIEDRIEKEKSKNKIEQDLLELKSVIKLQAWWRGTMIRREIGGFKMPKDKVDSKDSKGKGKGKDKRRGKKK</sequence>
<comment type="function">
    <text evidence="1 2 3">Component of the nexin-dynein regulatory complex (N-DRC), a key regulator of ciliary/flagellar motility which maintains the alignment and integrity of the distal axoneme and regulates microtubule sliding in motile axonemes. Binds calmodulin when cellular Ca(2+) levels are low and thereby contributes to the regulation of calcium and calmodulin-dependent protein kinase IV (CAMK4) activity; contributes to the regulation of CAMK4 signaling cascades. Required for normal axoneme assembly in sperm flagella, normal sperm tail formation and for male fertility.</text>
</comment>
<comment type="subunit">
    <text evidence="2 3 4">Component of the nexin-dynein regulatory complex (N-DRC). Interacts (via IQ domain) with CALM when calcium levels are low. Does not interact with CALM in the presence of Ca(2+). Interacts with the HSP70 proteins HSPA1L and HSPA8. May form a complex with CAMK4 and HSP70.</text>
</comment>
<comment type="subcellular location">
    <subcellularLocation>
        <location evidence="3">Cytoplasm</location>
    </subcellularLocation>
    <subcellularLocation>
        <location evidence="3">Cell projection</location>
        <location evidence="3">Cilium</location>
        <location evidence="3">Flagellum</location>
    </subcellularLocation>
    <subcellularLocation>
        <location evidence="3">Cell projection</location>
        <location evidence="3">Cilium</location>
    </subcellularLocation>
    <subcellularLocation>
        <location evidence="3">Cytoplasm</location>
        <location evidence="3">Cytoskeleton</location>
    </subcellularLocation>
    <subcellularLocation>
        <location evidence="2">Cytoplasm</location>
        <location evidence="2">Cytoskeleton</location>
        <location evidence="2">Flagellum axoneme</location>
    </subcellularLocation>
    <text evidence="3">First detected in the cytoplasm of pachytene spermatocytes. Colocalizes with alpha-tubulin at the manchette in developing spermatids. Detected in the flagellum of mature testicular spermatozoa, and in the flagellum and post-acrosomal region of the head of epididymal spermatozoa. Detected in cilia in trachea and oviduct.</text>
</comment>
<comment type="domain">
    <text evidence="4">The IQ domain mediates interaction with calmodulin when cellular Ca(2+) levels are low.</text>
</comment>
<comment type="similarity">
    <text evidence="7">Belongs to the DRC9 family.</text>
</comment>
<dbReference type="EMBL" id="AB052178">
    <property type="protein sequence ID" value="BAB18984.1"/>
    <property type="molecule type" value="mRNA"/>
</dbReference>
<dbReference type="RefSeq" id="NP_001271774.1">
    <property type="nucleotide sequence ID" value="NM_001284845.1"/>
</dbReference>
<dbReference type="SMR" id="Q9GKR7"/>
<dbReference type="STRING" id="9541.ENSMFAP00000035931"/>
<dbReference type="eggNOG" id="ENOG502QQR7">
    <property type="taxonomic scope" value="Eukaryota"/>
</dbReference>
<dbReference type="Proteomes" id="UP000233100">
    <property type="component" value="Unplaced"/>
</dbReference>
<dbReference type="GO" id="GO:0005737">
    <property type="term" value="C:cytoplasm"/>
    <property type="evidence" value="ECO:0000250"/>
    <property type="project" value="UniProtKB"/>
</dbReference>
<dbReference type="GO" id="GO:0002177">
    <property type="term" value="C:manchette"/>
    <property type="evidence" value="ECO:0000250"/>
    <property type="project" value="UniProtKB"/>
</dbReference>
<dbReference type="GO" id="GO:0031514">
    <property type="term" value="C:motile cilium"/>
    <property type="evidence" value="ECO:0000250"/>
    <property type="project" value="UniProtKB"/>
</dbReference>
<dbReference type="GO" id="GO:0036126">
    <property type="term" value="C:sperm flagellum"/>
    <property type="evidence" value="ECO:0000250"/>
    <property type="project" value="UniProtKB"/>
</dbReference>
<dbReference type="GO" id="GO:0005516">
    <property type="term" value="F:calmodulin binding"/>
    <property type="evidence" value="ECO:0000250"/>
    <property type="project" value="UniProtKB"/>
</dbReference>
<dbReference type="GO" id="GO:0007288">
    <property type="term" value="P:sperm axoneme assembly"/>
    <property type="evidence" value="ECO:0000250"/>
    <property type="project" value="UniProtKB"/>
</dbReference>
<dbReference type="GO" id="GO:0007286">
    <property type="term" value="P:spermatid development"/>
    <property type="evidence" value="ECO:0000250"/>
    <property type="project" value="UniProtKB"/>
</dbReference>
<dbReference type="CDD" id="cd23766">
    <property type="entry name" value="IQCG"/>
    <property type="match status" value="1"/>
</dbReference>
<dbReference type="InterPro" id="IPR000048">
    <property type="entry name" value="IQ_motif_EF-hand-BS"/>
</dbReference>
<dbReference type="InterPro" id="IPR042618">
    <property type="entry name" value="IQCG"/>
</dbReference>
<dbReference type="PANTHER" id="PTHR14871">
    <property type="entry name" value="DYNEIN REGULATORY COMPLEX PROTEIN 9"/>
    <property type="match status" value="1"/>
</dbReference>
<dbReference type="PANTHER" id="PTHR14871:SF1">
    <property type="entry name" value="DYNEIN REGULATORY COMPLEX PROTEIN 9"/>
    <property type="match status" value="1"/>
</dbReference>
<dbReference type="Pfam" id="PF00612">
    <property type="entry name" value="IQ"/>
    <property type="match status" value="1"/>
</dbReference>
<dbReference type="PROSITE" id="PS50096">
    <property type="entry name" value="IQ"/>
    <property type="match status" value="1"/>
</dbReference>
<gene>
    <name type="primary">IQCG</name>
    <name evidence="2" type="synonym">DRC9</name>
    <name type="ORF">QnpA-20160</name>
</gene>
<feature type="chain" id="PRO_0000282562" description="Dynein regulatory complex protein 9">
    <location>
        <begin position="1"/>
        <end position="443"/>
    </location>
</feature>
<feature type="domain" description="IQ" evidence="5">
    <location>
        <begin position="393"/>
        <end position="422"/>
    </location>
</feature>
<feature type="region of interest" description="Disordered" evidence="6">
    <location>
        <begin position="1"/>
        <end position="40"/>
    </location>
</feature>
<feature type="region of interest" description="Disordered" evidence="6">
    <location>
        <begin position="415"/>
        <end position="443"/>
    </location>
</feature>
<feature type="compositionally biased region" description="Basic and acidic residues" evidence="6">
    <location>
        <begin position="415"/>
        <end position="430"/>
    </location>
</feature>
<feature type="compositionally biased region" description="Basic residues" evidence="6">
    <location>
        <begin position="431"/>
        <end position="443"/>
    </location>
</feature>
<keyword id="KW-0112">Calmodulin-binding</keyword>
<keyword id="KW-0966">Cell projection</keyword>
<keyword id="KW-0969">Cilium</keyword>
<keyword id="KW-0963">Cytoplasm</keyword>
<keyword id="KW-0206">Cytoskeleton</keyword>
<keyword id="KW-0221">Differentiation</keyword>
<keyword id="KW-0282">Flagellum</keyword>
<keyword id="KW-1185">Reference proteome</keyword>
<keyword id="KW-0744">Spermatogenesis</keyword>
<name>DRC9_MACFA</name>
<proteinExistence type="evidence at transcript level"/>
<evidence type="ECO:0000250" key="1">
    <source>
        <dbReference type="UniProtKB" id="A3KQH2"/>
    </source>
</evidence>
<evidence type="ECO:0000250" key="2">
    <source>
        <dbReference type="UniProtKB" id="A8HQ54"/>
    </source>
</evidence>
<evidence type="ECO:0000250" key="3">
    <source>
        <dbReference type="UniProtKB" id="Q80W32"/>
    </source>
</evidence>
<evidence type="ECO:0000250" key="4">
    <source>
        <dbReference type="UniProtKB" id="Q9H095"/>
    </source>
</evidence>
<evidence type="ECO:0000255" key="5">
    <source>
        <dbReference type="PROSITE-ProRule" id="PRU00116"/>
    </source>
</evidence>
<evidence type="ECO:0000256" key="6">
    <source>
        <dbReference type="SAM" id="MobiDB-lite"/>
    </source>
</evidence>
<evidence type="ECO:0000305" key="7"/>
<protein>
    <recommendedName>
        <fullName evidence="2">Dynein regulatory complex protein 9</fullName>
    </recommendedName>
    <alternativeName>
        <fullName>IQ domain-containing protein G</fullName>
    </alternativeName>
</protein>